<accession>Q9CEE9</accession>
<organism>
    <name type="scientific">Lactococcus lactis subsp. lactis (strain IL1403)</name>
    <name type="common">Streptococcus lactis</name>
    <dbReference type="NCBI Taxonomy" id="272623"/>
    <lineage>
        <taxon>Bacteria</taxon>
        <taxon>Bacillati</taxon>
        <taxon>Bacillota</taxon>
        <taxon>Bacilli</taxon>
        <taxon>Lactobacillales</taxon>
        <taxon>Streptococcaceae</taxon>
        <taxon>Lactococcus</taxon>
    </lineage>
</organism>
<reference key="1">
    <citation type="journal article" date="2001" name="Genome Res.">
        <title>The complete genome sequence of the lactic acid bacterium Lactococcus lactis ssp. lactis IL1403.</title>
        <authorList>
            <person name="Bolotin A."/>
            <person name="Wincker P."/>
            <person name="Mauger S."/>
            <person name="Jaillon O."/>
            <person name="Malarme K."/>
            <person name="Weissenbach J."/>
            <person name="Ehrlich S.D."/>
            <person name="Sorokin A."/>
        </authorList>
    </citation>
    <scope>NUCLEOTIDE SEQUENCE [LARGE SCALE GENOMIC DNA]</scope>
    <source>
        <strain>IL1403</strain>
    </source>
</reference>
<sequence>MTKTKIIFMGTPQFAATVLKGLIDSNQYEILAVVTQPDRKVGRKQELRMTPVKELALTVNLPVLQPEKLSGSVEMTQIMTLLESGEVGIVTAAFGQFLPGKLLDVAQFAVNTHASLLPKYRGGAPIHYAIMNGEKEAGVTIMEMIRKMDAGDMIAQDSTPILEDDNVGTMFEKLALVGRDLLLETLPKYLSGQLKAQAQNEDEVTFSPNISPEEEKIDWNKSAREIFNKVRGMNPFPVAHTTWNGERFKIYETKVVDDSVGNLQAGEIVEKTKKSLKVATGEGLLELLFVQPAGKPKMDIVSFLNGLGQKIQVGDKFGD</sequence>
<name>FMT_LACLA</name>
<protein>
    <recommendedName>
        <fullName evidence="1">Methionyl-tRNA formyltransferase</fullName>
        <ecNumber evidence="1">2.1.2.9</ecNumber>
    </recommendedName>
</protein>
<keyword id="KW-0648">Protein biosynthesis</keyword>
<keyword id="KW-1185">Reference proteome</keyword>
<keyword id="KW-0808">Transferase</keyword>
<comment type="function">
    <text evidence="1">Attaches a formyl group to the free amino group of methionyl-tRNA(fMet). The formyl group appears to play a dual role in the initiator identity of N-formylmethionyl-tRNA by promoting its recognition by IF2 and preventing the misappropriation of this tRNA by the elongation apparatus.</text>
</comment>
<comment type="catalytic activity">
    <reaction evidence="1">
        <text>L-methionyl-tRNA(fMet) + (6R)-10-formyltetrahydrofolate = N-formyl-L-methionyl-tRNA(fMet) + (6S)-5,6,7,8-tetrahydrofolate + H(+)</text>
        <dbReference type="Rhea" id="RHEA:24380"/>
        <dbReference type="Rhea" id="RHEA-COMP:9952"/>
        <dbReference type="Rhea" id="RHEA-COMP:9953"/>
        <dbReference type="ChEBI" id="CHEBI:15378"/>
        <dbReference type="ChEBI" id="CHEBI:57453"/>
        <dbReference type="ChEBI" id="CHEBI:78530"/>
        <dbReference type="ChEBI" id="CHEBI:78844"/>
        <dbReference type="ChEBI" id="CHEBI:195366"/>
        <dbReference type="EC" id="2.1.2.9"/>
    </reaction>
</comment>
<comment type="similarity">
    <text evidence="1 2">Belongs to the Fmt family.</text>
</comment>
<evidence type="ECO:0000255" key="1">
    <source>
        <dbReference type="HAMAP-Rule" id="MF_00182"/>
    </source>
</evidence>
<evidence type="ECO:0000305" key="2"/>
<feature type="chain" id="PRO_0000082979" description="Methionyl-tRNA formyltransferase">
    <location>
        <begin position="1"/>
        <end position="319"/>
    </location>
</feature>
<feature type="binding site" evidence="1">
    <location>
        <begin position="115"/>
        <end position="118"/>
    </location>
    <ligand>
        <name>(6S)-5,6,7,8-tetrahydrofolate</name>
        <dbReference type="ChEBI" id="CHEBI:57453"/>
    </ligand>
</feature>
<dbReference type="EC" id="2.1.2.9" evidence="1"/>
<dbReference type="EMBL" id="AE005176">
    <property type="protein sequence ID" value="AAK05991.1"/>
    <property type="molecule type" value="Genomic_DNA"/>
</dbReference>
<dbReference type="PIR" id="E86861">
    <property type="entry name" value="E86861"/>
</dbReference>
<dbReference type="RefSeq" id="NP_268050.1">
    <property type="nucleotide sequence ID" value="NC_002662.1"/>
</dbReference>
<dbReference type="RefSeq" id="WP_010906187.1">
    <property type="nucleotide sequence ID" value="NC_002662.1"/>
</dbReference>
<dbReference type="SMR" id="Q9CEE9"/>
<dbReference type="PaxDb" id="272623-L0362"/>
<dbReference type="EnsemblBacteria" id="AAK05991">
    <property type="protein sequence ID" value="AAK05991"/>
    <property type="gene ID" value="L0362"/>
</dbReference>
<dbReference type="KEGG" id="lla:L0362"/>
<dbReference type="PATRIC" id="fig|272623.7.peg.2028"/>
<dbReference type="eggNOG" id="COG0223">
    <property type="taxonomic scope" value="Bacteria"/>
</dbReference>
<dbReference type="HOGENOM" id="CLU_033347_1_1_9"/>
<dbReference type="OrthoDB" id="9802815at2"/>
<dbReference type="Proteomes" id="UP000002196">
    <property type="component" value="Chromosome"/>
</dbReference>
<dbReference type="GO" id="GO:0005829">
    <property type="term" value="C:cytosol"/>
    <property type="evidence" value="ECO:0007669"/>
    <property type="project" value="TreeGrafter"/>
</dbReference>
<dbReference type="GO" id="GO:0004479">
    <property type="term" value="F:methionyl-tRNA formyltransferase activity"/>
    <property type="evidence" value="ECO:0007669"/>
    <property type="project" value="UniProtKB-UniRule"/>
</dbReference>
<dbReference type="CDD" id="cd08646">
    <property type="entry name" value="FMT_core_Met-tRNA-FMT_N"/>
    <property type="match status" value="1"/>
</dbReference>
<dbReference type="CDD" id="cd08704">
    <property type="entry name" value="Met_tRNA_FMT_C"/>
    <property type="match status" value="1"/>
</dbReference>
<dbReference type="Gene3D" id="3.10.25.10">
    <property type="entry name" value="Formyl transferase, C-terminal domain"/>
    <property type="match status" value="1"/>
</dbReference>
<dbReference type="Gene3D" id="3.40.50.170">
    <property type="entry name" value="Formyl transferase, N-terminal domain"/>
    <property type="match status" value="1"/>
</dbReference>
<dbReference type="HAMAP" id="MF_00182">
    <property type="entry name" value="Formyl_trans"/>
    <property type="match status" value="1"/>
</dbReference>
<dbReference type="InterPro" id="IPR005794">
    <property type="entry name" value="Fmt"/>
</dbReference>
<dbReference type="InterPro" id="IPR005793">
    <property type="entry name" value="Formyl_trans_C"/>
</dbReference>
<dbReference type="InterPro" id="IPR037022">
    <property type="entry name" value="Formyl_trans_C_sf"/>
</dbReference>
<dbReference type="InterPro" id="IPR002376">
    <property type="entry name" value="Formyl_transf_N"/>
</dbReference>
<dbReference type="InterPro" id="IPR036477">
    <property type="entry name" value="Formyl_transf_N_sf"/>
</dbReference>
<dbReference type="InterPro" id="IPR011034">
    <property type="entry name" value="Formyl_transferase-like_C_sf"/>
</dbReference>
<dbReference type="InterPro" id="IPR044135">
    <property type="entry name" value="Met-tRNA-FMT_C"/>
</dbReference>
<dbReference type="InterPro" id="IPR041711">
    <property type="entry name" value="Met-tRNA-FMT_N"/>
</dbReference>
<dbReference type="NCBIfam" id="TIGR00460">
    <property type="entry name" value="fmt"/>
    <property type="match status" value="1"/>
</dbReference>
<dbReference type="PANTHER" id="PTHR11138">
    <property type="entry name" value="METHIONYL-TRNA FORMYLTRANSFERASE"/>
    <property type="match status" value="1"/>
</dbReference>
<dbReference type="PANTHER" id="PTHR11138:SF5">
    <property type="entry name" value="METHIONYL-TRNA FORMYLTRANSFERASE, MITOCHONDRIAL"/>
    <property type="match status" value="1"/>
</dbReference>
<dbReference type="Pfam" id="PF02911">
    <property type="entry name" value="Formyl_trans_C"/>
    <property type="match status" value="1"/>
</dbReference>
<dbReference type="Pfam" id="PF00551">
    <property type="entry name" value="Formyl_trans_N"/>
    <property type="match status" value="1"/>
</dbReference>
<dbReference type="SUPFAM" id="SSF50486">
    <property type="entry name" value="FMT C-terminal domain-like"/>
    <property type="match status" value="1"/>
</dbReference>
<dbReference type="SUPFAM" id="SSF53328">
    <property type="entry name" value="Formyltransferase"/>
    <property type="match status" value="1"/>
</dbReference>
<gene>
    <name evidence="1" type="primary">fmt</name>
    <name type="ordered locus">LL1893</name>
    <name type="ORF">L0362</name>
</gene>
<proteinExistence type="inferred from homology"/>